<dbReference type="EC" id="7.1.1.-" evidence="7"/>
<dbReference type="EMBL" id="AB019228">
    <property type="protein sequence ID" value="BAA96917.1"/>
    <property type="molecule type" value="Genomic_DNA"/>
</dbReference>
<dbReference type="EMBL" id="CP002688">
    <property type="protein sequence ID" value="AED97025.1"/>
    <property type="molecule type" value="Genomic_DNA"/>
</dbReference>
<dbReference type="EMBL" id="CP002688">
    <property type="protein sequence ID" value="AED97026.1"/>
    <property type="molecule type" value="Genomic_DNA"/>
</dbReference>
<dbReference type="EMBL" id="AY080743">
    <property type="protein sequence ID" value="AAL85990.1"/>
    <property type="molecule type" value="mRNA"/>
</dbReference>
<dbReference type="EMBL" id="AY113999">
    <property type="protein sequence ID" value="AAM45047.1"/>
    <property type="molecule type" value="mRNA"/>
</dbReference>
<dbReference type="EMBL" id="AK318705">
    <property type="protein sequence ID" value="BAH56820.1"/>
    <property type="molecule type" value="mRNA"/>
</dbReference>
<dbReference type="RefSeq" id="NP_001119457.1">
    <molecule id="Q9LVM2-2"/>
    <property type="nucleotide sequence ID" value="NM_001125985.1"/>
</dbReference>
<dbReference type="RefSeq" id="NP_200634.1">
    <molecule id="Q9LVM2-1"/>
    <property type="nucleotide sequence ID" value="NM_125211.4"/>
</dbReference>
<dbReference type="PDB" id="7WFG">
    <property type="method" value="EM"/>
    <property type="resolution" value="4.33 A"/>
    <property type="chains" value="N=1-209"/>
</dbReference>
<dbReference type="PDB" id="7WG5">
    <property type="method" value="EM"/>
    <property type="resolution" value="3.89 A"/>
    <property type="chains" value="N=1-209"/>
</dbReference>
<dbReference type="PDBsum" id="7WFG"/>
<dbReference type="PDBsum" id="7WG5"/>
<dbReference type="EMDB" id="EMD-32465"/>
<dbReference type="EMDB" id="EMD-32477"/>
<dbReference type="SMR" id="Q9LVM2"/>
<dbReference type="FunCoup" id="Q9LVM2">
    <property type="interactions" value="958"/>
</dbReference>
<dbReference type="STRING" id="3702.Q9LVM2"/>
<dbReference type="TCDB" id="3.D.1.8.1">
    <property type="family name" value="the h+ or na+-translocating nadh dehydrogenase (ndh) family"/>
</dbReference>
<dbReference type="PaxDb" id="3702-AT5G58260.1"/>
<dbReference type="ProteomicsDB" id="251319">
    <molecule id="Q9LVM2-1"/>
</dbReference>
<dbReference type="EnsemblPlants" id="AT5G58260.1">
    <molecule id="Q9LVM2-1"/>
    <property type="protein sequence ID" value="AT5G58260.1"/>
    <property type="gene ID" value="AT5G58260"/>
</dbReference>
<dbReference type="EnsemblPlants" id="AT5G58260.2">
    <molecule id="Q9LVM2-2"/>
    <property type="protein sequence ID" value="AT5G58260.2"/>
    <property type="gene ID" value="AT5G58260"/>
</dbReference>
<dbReference type="GeneID" id="835938"/>
<dbReference type="Gramene" id="AT5G58260.1">
    <molecule id="Q9LVM2-1"/>
    <property type="protein sequence ID" value="AT5G58260.1"/>
    <property type="gene ID" value="AT5G58260"/>
</dbReference>
<dbReference type="Gramene" id="AT5G58260.2">
    <molecule id="Q9LVM2-2"/>
    <property type="protein sequence ID" value="AT5G58260.2"/>
    <property type="gene ID" value="AT5G58260"/>
</dbReference>
<dbReference type="KEGG" id="ath:AT5G58260"/>
<dbReference type="Araport" id="AT5G58260"/>
<dbReference type="TAIR" id="AT5G58260">
    <property type="gene designation" value="NDHN"/>
</dbReference>
<dbReference type="eggNOG" id="ENOG502QUZI">
    <property type="taxonomic scope" value="Eukaryota"/>
</dbReference>
<dbReference type="HOGENOM" id="CLU_087432_0_0_1"/>
<dbReference type="InParanoid" id="Q9LVM2"/>
<dbReference type="OMA" id="CYQGAIL"/>
<dbReference type="OrthoDB" id="2013402at2759"/>
<dbReference type="PhylomeDB" id="Q9LVM2"/>
<dbReference type="PRO" id="PR:Q9LVM2"/>
<dbReference type="Proteomes" id="UP000006548">
    <property type="component" value="Chromosome 5"/>
</dbReference>
<dbReference type="ExpressionAtlas" id="Q9LVM2">
    <property type="expression patterns" value="baseline and differential"/>
</dbReference>
<dbReference type="GO" id="GO:0009507">
    <property type="term" value="C:chloroplast"/>
    <property type="evidence" value="ECO:0007005"/>
    <property type="project" value="TAIR"/>
</dbReference>
<dbReference type="GO" id="GO:0009941">
    <property type="term" value="C:chloroplast envelope"/>
    <property type="evidence" value="ECO:0007005"/>
    <property type="project" value="TAIR"/>
</dbReference>
<dbReference type="GO" id="GO:0009535">
    <property type="term" value="C:chloroplast thylakoid membrane"/>
    <property type="evidence" value="ECO:0007005"/>
    <property type="project" value="TAIR"/>
</dbReference>
<dbReference type="GO" id="GO:0010598">
    <property type="term" value="C:NAD(P)H dehydrogenase complex (plastoquinone)"/>
    <property type="evidence" value="ECO:0000304"/>
    <property type="project" value="TAIR"/>
</dbReference>
<dbReference type="GO" id="GO:0009536">
    <property type="term" value="C:plastid"/>
    <property type="evidence" value="ECO:0007005"/>
    <property type="project" value="TAIR"/>
</dbReference>
<dbReference type="GO" id="GO:0016655">
    <property type="term" value="F:oxidoreductase activity, acting on NAD(P)H, quinone or similar compound as acceptor"/>
    <property type="evidence" value="ECO:0007669"/>
    <property type="project" value="InterPro"/>
</dbReference>
<dbReference type="GO" id="GO:0048038">
    <property type="term" value="F:quinone binding"/>
    <property type="evidence" value="ECO:0007669"/>
    <property type="project" value="UniProtKB-KW"/>
</dbReference>
<dbReference type="GO" id="GO:0050832">
    <property type="term" value="P:defense response to fungus"/>
    <property type="evidence" value="ECO:0000314"/>
    <property type="project" value="TAIR"/>
</dbReference>
<dbReference type="GO" id="GO:0010258">
    <property type="term" value="P:NADH dehydrogenase complex (plastoquinone) assembly"/>
    <property type="evidence" value="ECO:0000315"/>
    <property type="project" value="TAIR"/>
</dbReference>
<dbReference type="InterPro" id="IPR020874">
    <property type="entry name" value="NAD(P)H-quinone_OxRdtase_su_N"/>
</dbReference>
<dbReference type="PANTHER" id="PTHR35515">
    <property type="entry name" value="NAD(P)H-QUINONE OXIDOREDUCTASE SUBUNIT N, CHLOROPLASTIC"/>
    <property type="match status" value="1"/>
</dbReference>
<dbReference type="PANTHER" id="PTHR35515:SF1">
    <property type="entry name" value="NAD(P)H-QUINONE OXIDOREDUCTASE SUBUNIT N, CHLOROPLASTIC"/>
    <property type="match status" value="1"/>
</dbReference>
<dbReference type="Pfam" id="PF11909">
    <property type="entry name" value="NdhN"/>
    <property type="match status" value="1"/>
</dbReference>
<proteinExistence type="evidence at protein level"/>
<reference key="1">
    <citation type="journal article" date="2000" name="DNA Res.">
        <title>Structural analysis of Arabidopsis thaliana chromosome 5. X. Sequence features of the regions of 3,076,755 bp covered by sixty P1 and TAC clones.</title>
        <authorList>
            <person name="Sato S."/>
            <person name="Nakamura Y."/>
            <person name="Kaneko T."/>
            <person name="Katoh T."/>
            <person name="Asamizu E."/>
            <person name="Kotani H."/>
            <person name="Tabata S."/>
        </authorList>
    </citation>
    <scope>NUCLEOTIDE SEQUENCE [LARGE SCALE GENOMIC DNA]</scope>
    <source>
        <strain>cv. Columbia</strain>
    </source>
</reference>
<reference key="2">
    <citation type="journal article" date="2017" name="Plant J.">
        <title>Araport11: a complete reannotation of the Arabidopsis thaliana reference genome.</title>
        <authorList>
            <person name="Cheng C.Y."/>
            <person name="Krishnakumar V."/>
            <person name="Chan A.P."/>
            <person name="Thibaud-Nissen F."/>
            <person name="Schobel S."/>
            <person name="Town C.D."/>
        </authorList>
    </citation>
    <scope>GENOME REANNOTATION</scope>
    <source>
        <strain>cv. Columbia</strain>
    </source>
</reference>
<reference key="3">
    <citation type="journal article" date="2003" name="Science">
        <title>Empirical analysis of transcriptional activity in the Arabidopsis genome.</title>
        <authorList>
            <person name="Yamada K."/>
            <person name="Lim J."/>
            <person name="Dale J.M."/>
            <person name="Chen H."/>
            <person name="Shinn P."/>
            <person name="Palm C.J."/>
            <person name="Southwick A.M."/>
            <person name="Wu H.C."/>
            <person name="Kim C.J."/>
            <person name="Nguyen M."/>
            <person name="Pham P.K."/>
            <person name="Cheuk R.F."/>
            <person name="Karlin-Newmann G."/>
            <person name="Liu S.X."/>
            <person name="Lam B."/>
            <person name="Sakano H."/>
            <person name="Wu T."/>
            <person name="Yu G."/>
            <person name="Miranda M."/>
            <person name="Quach H.L."/>
            <person name="Tripp M."/>
            <person name="Chang C.H."/>
            <person name="Lee J.M."/>
            <person name="Toriumi M.J."/>
            <person name="Chan M.M."/>
            <person name="Tang C.C."/>
            <person name="Onodera C.S."/>
            <person name="Deng J.M."/>
            <person name="Akiyama K."/>
            <person name="Ansari Y."/>
            <person name="Arakawa T."/>
            <person name="Banh J."/>
            <person name="Banno F."/>
            <person name="Bowser L."/>
            <person name="Brooks S.Y."/>
            <person name="Carninci P."/>
            <person name="Chao Q."/>
            <person name="Choy N."/>
            <person name="Enju A."/>
            <person name="Goldsmith A.D."/>
            <person name="Gurjal M."/>
            <person name="Hansen N.F."/>
            <person name="Hayashizaki Y."/>
            <person name="Johnson-Hopson C."/>
            <person name="Hsuan V.W."/>
            <person name="Iida K."/>
            <person name="Karnes M."/>
            <person name="Khan S."/>
            <person name="Koesema E."/>
            <person name="Ishida J."/>
            <person name="Jiang P.X."/>
            <person name="Jones T."/>
            <person name="Kawai J."/>
            <person name="Kamiya A."/>
            <person name="Meyers C."/>
            <person name="Nakajima M."/>
            <person name="Narusaka M."/>
            <person name="Seki M."/>
            <person name="Sakurai T."/>
            <person name="Satou M."/>
            <person name="Tamse R."/>
            <person name="Vaysberg M."/>
            <person name="Wallender E.K."/>
            <person name="Wong C."/>
            <person name="Yamamura Y."/>
            <person name="Yuan S."/>
            <person name="Shinozaki K."/>
            <person name="Davis R.W."/>
            <person name="Theologis A."/>
            <person name="Ecker J.R."/>
        </authorList>
    </citation>
    <scope>NUCLEOTIDE SEQUENCE [LARGE SCALE MRNA] (ISOFORM 1)</scope>
    <source>
        <strain>cv. Columbia</strain>
    </source>
</reference>
<reference key="4">
    <citation type="journal article" date="2009" name="DNA Res.">
        <title>Analysis of multiple occurrences of alternative splicing events in Arabidopsis thaliana using novel sequenced full-length cDNAs.</title>
        <authorList>
            <person name="Iida K."/>
            <person name="Fukami-Kobayashi K."/>
            <person name="Toyoda A."/>
            <person name="Sakaki Y."/>
            <person name="Kobayashi M."/>
            <person name="Seki M."/>
            <person name="Shinozaki K."/>
        </authorList>
    </citation>
    <scope>NUCLEOTIDE SEQUENCE [LARGE SCALE MRNA] (ISOFORM 2)</scope>
    <source>
        <strain>cv. Columbia</strain>
        <tissue evidence="10">Rosette leaf</tissue>
    </source>
</reference>
<reference key="5">
    <citation type="journal article" date="2005" name="Plant Cell">
        <title>New subunits NDH-M, -N, and -O, encoded by nuclear genes, are essential for plastid Ndh complex functioning in higher plants.</title>
        <authorList>
            <person name="Rumeau D."/>
            <person name="Becuwe-Linka N."/>
            <person name="Beyly A."/>
            <person name="Louwagie M."/>
            <person name="Garin J."/>
            <person name="Peltier G."/>
        </authorList>
    </citation>
    <scope>COMPONENT OF THE NDH COMPLEX</scope>
    <scope>DISRUPTION PHENOTYPE</scope>
</reference>
<reference key="6">
    <citation type="journal article" date="2009" name="Mol. Plant">
        <title>Towards characterization of the chloroplast NAD(P)H dehydrogenase complex.</title>
        <authorList>
            <person name="Suorsa M."/>
            <person name="Sirpioe S."/>
            <person name="Aro E.M."/>
        </authorList>
    </citation>
    <scope>REVIEW</scope>
</reference>
<reference key="7">
    <citation type="journal article" date="2011" name="Biochim. Biophys. Acta">
        <title>Structure and biogenesis of the chloroplast NAD(P)H dehydrogenase complex.</title>
        <authorList>
            <person name="Peng L."/>
            <person name="Yamamoto H."/>
            <person name="Shikanai T."/>
        </authorList>
    </citation>
    <scope>REVIEW</scope>
</reference>
<reference key="8">
    <citation type="journal article" date="2011" name="Plant Cell Physiol.">
        <title>Structure of the chloroplast NADH dehydrogenase-like complex: nomenclature for nuclear-encoded subunits.</title>
        <authorList>
            <person name="Ifuku K."/>
            <person name="Endo T."/>
            <person name="Shikanai T."/>
            <person name="Aro E.M."/>
        </authorList>
    </citation>
    <scope>NOMENCLATURE</scope>
    <scope>COMPONENT OF THE NDH COMPLEX</scope>
</reference>
<organism evidence="11">
    <name type="scientific">Arabidopsis thaliana</name>
    <name type="common">Mouse-ear cress</name>
    <dbReference type="NCBI Taxonomy" id="3702"/>
    <lineage>
        <taxon>Eukaryota</taxon>
        <taxon>Viridiplantae</taxon>
        <taxon>Streptophyta</taxon>
        <taxon>Embryophyta</taxon>
        <taxon>Tracheophyta</taxon>
        <taxon>Spermatophyta</taxon>
        <taxon>Magnoliopsida</taxon>
        <taxon>eudicotyledons</taxon>
        <taxon>Gunneridae</taxon>
        <taxon>Pentapetalae</taxon>
        <taxon>rosids</taxon>
        <taxon>malvids</taxon>
        <taxon>Brassicales</taxon>
        <taxon>Brassicaceae</taxon>
        <taxon>Camelineae</taxon>
        <taxon>Arabidopsis</taxon>
    </lineage>
</organism>
<feature type="transit peptide" description="Chloroplast" evidence="2">
    <location>
        <begin position="1"/>
        <end position="45"/>
    </location>
</feature>
<feature type="chain" id="PRO_0000431814" description="NAD(P)H-quinone oxidoreductase subunit N, chloroplastic">
    <location>
        <begin position="46"/>
        <end position="209"/>
    </location>
</feature>
<feature type="splice variant" id="VSP_057441" description="In isoform 2.">
    <location>
        <begin position="164"/>
        <end position="209"/>
    </location>
</feature>
<sequence length="209" mass="23398">MGSRAICIQRVAPPCFEASQVKKIKTVGSFLVNTRSKRRRSTGVKCSSIADYIGGDLVKPDIGQWLQDVEEHKAIAIYAPHEGGYEGRYLNRLKMQGYYFLDISARGLGDPETTLLKNYPVCPAHLGKQPIARWYYPPEVDYRLAALPPSAKGLVVWVLEAKVLSKSELQFLALLPSLRPNVRVIAECGNWRKFVWKPLAEIANLAAQE</sequence>
<protein>
    <recommendedName>
        <fullName evidence="7">NAD(P)H-quinone oxidoreductase subunit N, chloroplastic</fullName>
        <ecNumber evidence="7">7.1.1.-</ecNumber>
    </recommendedName>
    <alternativeName>
        <fullName evidence="6">NAD(P)H dehydrogenase subunit N</fullName>
        <shortName evidence="7">NDH subunit N</shortName>
        <shortName evidence="5">NDH-N</shortName>
    </alternativeName>
    <alternativeName>
        <fullName evidence="7">NADH-plastoquinone oxidoreductase subunit N</fullName>
    </alternativeName>
</protein>
<comment type="function">
    <text evidence="7">NDH shuttles electrons from NAD(P)H:plastoquinone, via FMN and iron-sulfur (Fe-S) centers, to quinones in the photosynthetic chain and possibly in a chloroplast respiratory chain. The immediate electron acceptor for the enzyme in this species is believed to be plastoquinone. Couples the redox reaction to proton translocation, and thus conserves the redox energy in a proton gradient.</text>
</comment>
<comment type="catalytic activity">
    <reaction evidence="7">
        <text>a plastoquinone + NADH + (n+1) H(+)(in) = a plastoquinol + NAD(+) + n H(+)(out)</text>
        <dbReference type="Rhea" id="RHEA:42608"/>
        <dbReference type="Rhea" id="RHEA-COMP:9561"/>
        <dbReference type="Rhea" id="RHEA-COMP:9562"/>
        <dbReference type="ChEBI" id="CHEBI:15378"/>
        <dbReference type="ChEBI" id="CHEBI:17757"/>
        <dbReference type="ChEBI" id="CHEBI:57540"/>
        <dbReference type="ChEBI" id="CHEBI:57945"/>
        <dbReference type="ChEBI" id="CHEBI:62192"/>
    </reaction>
</comment>
<comment type="catalytic activity">
    <reaction evidence="7">
        <text>a plastoquinone + NADPH + (n+1) H(+)(in) = a plastoquinol + NADP(+) + n H(+)(out)</text>
        <dbReference type="Rhea" id="RHEA:42612"/>
        <dbReference type="Rhea" id="RHEA-COMP:9561"/>
        <dbReference type="Rhea" id="RHEA-COMP:9562"/>
        <dbReference type="ChEBI" id="CHEBI:15378"/>
        <dbReference type="ChEBI" id="CHEBI:17757"/>
        <dbReference type="ChEBI" id="CHEBI:57783"/>
        <dbReference type="ChEBI" id="CHEBI:58349"/>
        <dbReference type="ChEBI" id="CHEBI:62192"/>
    </reaction>
</comment>
<comment type="subunit">
    <text evidence="3 4">Part of the chloroplast NDH complex, composed of a mixture of chloroplast and nucleus encoded subunits. Component of the NDH subcomplex A, at least composed of ndhH, ndhI, ndhJ, ndhK, ndhL, ndhM, ndhN and ndhO.</text>
</comment>
<comment type="subcellular location">
    <subcellularLocation>
        <location evidence="1">Plastid</location>
        <location evidence="1">Chloroplast thylakoid membrane</location>
        <topology evidence="7">Peripheral membrane protein</topology>
        <orientation evidence="7">Stromal side</orientation>
    </subcellularLocation>
</comment>
<comment type="alternative products">
    <event type="alternative splicing"/>
    <isoform>
        <id>Q9LVM2-1</id>
        <name>1</name>
        <sequence type="displayed"/>
    </isoform>
    <isoform>
        <id>Q9LVM2-2</id>
        <name>2</name>
        <sequence type="described" ref="VSP_057441"/>
    </isoform>
</comment>
<comment type="disruption phenotype">
    <text evidence="3">Malfunction of the NDH complex.</text>
</comment>
<comment type="miscellaneous">
    <molecule>Isoform 2</molecule>
    <text evidence="7">May be due to intron retention.</text>
</comment>
<comment type="similarity">
    <text evidence="7">Belongs to the NDH complex subunit N family.</text>
</comment>
<name>NDHN_ARATH</name>
<gene>
    <name evidence="6" type="primary">ndhN</name>
    <name evidence="5" type="synonym">NDH-N</name>
    <name evidence="8" type="ordered locus">At5g58260</name>
    <name evidence="9" type="ORF">MCK7.13</name>
</gene>
<evidence type="ECO:0000250" key="1">
    <source>
        <dbReference type="UniProtKB" id="Q9CAC5"/>
    </source>
</evidence>
<evidence type="ECO:0000255" key="2"/>
<evidence type="ECO:0000269" key="3">
    <source>
    </source>
</evidence>
<evidence type="ECO:0000269" key="4">
    <source>
    </source>
</evidence>
<evidence type="ECO:0000303" key="5">
    <source>
    </source>
</evidence>
<evidence type="ECO:0000303" key="6">
    <source>
    </source>
</evidence>
<evidence type="ECO:0000305" key="7"/>
<evidence type="ECO:0000312" key="8">
    <source>
        <dbReference type="Araport" id="AT5G58260"/>
    </source>
</evidence>
<evidence type="ECO:0000312" key="9">
    <source>
        <dbReference type="EMBL" id="BAA96917.1"/>
    </source>
</evidence>
<evidence type="ECO:0000312" key="10">
    <source>
        <dbReference type="EMBL" id="BAH56820.1"/>
    </source>
</evidence>
<evidence type="ECO:0000312" key="11">
    <source>
        <dbReference type="Proteomes" id="UP000006548"/>
    </source>
</evidence>
<accession>Q9LVM2</accession>
<accession>B3H5R4</accession>
<keyword id="KW-0002">3D-structure</keyword>
<keyword id="KW-0025">Alternative splicing</keyword>
<keyword id="KW-0150">Chloroplast</keyword>
<keyword id="KW-0472">Membrane</keyword>
<keyword id="KW-0520">NAD</keyword>
<keyword id="KW-0521">NADP</keyword>
<keyword id="KW-0934">Plastid</keyword>
<keyword id="KW-0618">Plastoquinone</keyword>
<keyword id="KW-0874">Quinone</keyword>
<keyword id="KW-1185">Reference proteome</keyword>
<keyword id="KW-0793">Thylakoid</keyword>
<keyword id="KW-0809">Transit peptide</keyword>
<keyword id="KW-1278">Translocase</keyword>
<keyword id="KW-0813">Transport</keyword>